<organism>
    <name type="scientific">Syntrophomonas wolfei subsp. wolfei (strain DSM 2245B / Goettingen)</name>
    <dbReference type="NCBI Taxonomy" id="335541"/>
    <lineage>
        <taxon>Bacteria</taxon>
        <taxon>Bacillati</taxon>
        <taxon>Bacillota</taxon>
        <taxon>Clostridia</taxon>
        <taxon>Eubacteriales</taxon>
        <taxon>Syntrophomonadaceae</taxon>
        <taxon>Syntrophomonas</taxon>
    </lineage>
</organism>
<comment type="function">
    <text evidence="1">One of the primary rRNA binding proteins, it binds directly to 16S rRNA where it nucleates assembly of the head domain of the 30S subunit. Is located at the subunit interface close to the decoding center, probably blocks exit of the E-site tRNA.</text>
</comment>
<comment type="subunit">
    <text evidence="1">Part of the 30S ribosomal subunit. Contacts proteins S9 and S11.</text>
</comment>
<comment type="similarity">
    <text evidence="1">Belongs to the universal ribosomal protein uS7 family.</text>
</comment>
<feature type="chain" id="PRO_1000014313" description="Small ribosomal subunit protein uS7">
    <location>
        <begin position="1"/>
        <end position="156"/>
    </location>
</feature>
<gene>
    <name evidence="1" type="primary">rpsG</name>
    <name type="ordered locus">Swol_2337</name>
</gene>
<accession>Q0AUH6</accession>
<dbReference type="EMBL" id="CP000448">
    <property type="protein sequence ID" value="ABI69628.1"/>
    <property type="molecule type" value="Genomic_DNA"/>
</dbReference>
<dbReference type="RefSeq" id="WP_011641712.1">
    <property type="nucleotide sequence ID" value="NC_008346.1"/>
</dbReference>
<dbReference type="SMR" id="Q0AUH6"/>
<dbReference type="STRING" id="335541.Swol_2337"/>
<dbReference type="KEGG" id="swo:Swol_2337"/>
<dbReference type="eggNOG" id="COG0049">
    <property type="taxonomic scope" value="Bacteria"/>
</dbReference>
<dbReference type="HOGENOM" id="CLU_072226_1_1_9"/>
<dbReference type="OrthoDB" id="9807653at2"/>
<dbReference type="Proteomes" id="UP000001968">
    <property type="component" value="Chromosome"/>
</dbReference>
<dbReference type="GO" id="GO:0015935">
    <property type="term" value="C:small ribosomal subunit"/>
    <property type="evidence" value="ECO:0007669"/>
    <property type="project" value="InterPro"/>
</dbReference>
<dbReference type="GO" id="GO:0019843">
    <property type="term" value="F:rRNA binding"/>
    <property type="evidence" value="ECO:0007669"/>
    <property type="project" value="UniProtKB-UniRule"/>
</dbReference>
<dbReference type="GO" id="GO:0003735">
    <property type="term" value="F:structural constituent of ribosome"/>
    <property type="evidence" value="ECO:0007669"/>
    <property type="project" value="InterPro"/>
</dbReference>
<dbReference type="GO" id="GO:0000049">
    <property type="term" value="F:tRNA binding"/>
    <property type="evidence" value="ECO:0007669"/>
    <property type="project" value="UniProtKB-UniRule"/>
</dbReference>
<dbReference type="GO" id="GO:0006412">
    <property type="term" value="P:translation"/>
    <property type="evidence" value="ECO:0007669"/>
    <property type="project" value="UniProtKB-UniRule"/>
</dbReference>
<dbReference type="CDD" id="cd14869">
    <property type="entry name" value="uS7_Bacteria"/>
    <property type="match status" value="1"/>
</dbReference>
<dbReference type="FunFam" id="1.10.455.10:FF:000001">
    <property type="entry name" value="30S ribosomal protein S7"/>
    <property type="match status" value="1"/>
</dbReference>
<dbReference type="Gene3D" id="1.10.455.10">
    <property type="entry name" value="Ribosomal protein S7 domain"/>
    <property type="match status" value="1"/>
</dbReference>
<dbReference type="HAMAP" id="MF_00480_B">
    <property type="entry name" value="Ribosomal_uS7_B"/>
    <property type="match status" value="1"/>
</dbReference>
<dbReference type="InterPro" id="IPR000235">
    <property type="entry name" value="Ribosomal_uS7"/>
</dbReference>
<dbReference type="InterPro" id="IPR005717">
    <property type="entry name" value="Ribosomal_uS7_bac/org-type"/>
</dbReference>
<dbReference type="InterPro" id="IPR020606">
    <property type="entry name" value="Ribosomal_uS7_CS"/>
</dbReference>
<dbReference type="InterPro" id="IPR023798">
    <property type="entry name" value="Ribosomal_uS7_dom"/>
</dbReference>
<dbReference type="InterPro" id="IPR036823">
    <property type="entry name" value="Ribosomal_uS7_dom_sf"/>
</dbReference>
<dbReference type="NCBIfam" id="TIGR01029">
    <property type="entry name" value="rpsG_bact"/>
    <property type="match status" value="1"/>
</dbReference>
<dbReference type="PANTHER" id="PTHR11205">
    <property type="entry name" value="RIBOSOMAL PROTEIN S7"/>
    <property type="match status" value="1"/>
</dbReference>
<dbReference type="Pfam" id="PF00177">
    <property type="entry name" value="Ribosomal_S7"/>
    <property type="match status" value="1"/>
</dbReference>
<dbReference type="PIRSF" id="PIRSF002122">
    <property type="entry name" value="RPS7p_RPS7a_RPS5e_RPS7o"/>
    <property type="match status" value="1"/>
</dbReference>
<dbReference type="SUPFAM" id="SSF47973">
    <property type="entry name" value="Ribosomal protein S7"/>
    <property type="match status" value="1"/>
</dbReference>
<dbReference type="PROSITE" id="PS00052">
    <property type="entry name" value="RIBOSOMAL_S7"/>
    <property type="match status" value="1"/>
</dbReference>
<name>RS7_SYNWW</name>
<sequence>MPRKGPVPKRDVLPDPIYNSKIFTKLVNQLMWDGKKSLAEKICYGAFAIVQSKTRREPLEVFEEAMKNITPIVEVRARRVGGANYQVPVEVRSDRRQTLAIRWLVGYARKRGEKTMAERLAGEIMDAANHTGAAVKKREDTHKMAEANKAFAHYRW</sequence>
<keyword id="KW-1185">Reference proteome</keyword>
<keyword id="KW-0687">Ribonucleoprotein</keyword>
<keyword id="KW-0689">Ribosomal protein</keyword>
<keyword id="KW-0694">RNA-binding</keyword>
<keyword id="KW-0699">rRNA-binding</keyword>
<keyword id="KW-0820">tRNA-binding</keyword>
<evidence type="ECO:0000255" key="1">
    <source>
        <dbReference type="HAMAP-Rule" id="MF_00480"/>
    </source>
</evidence>
<evidence type="ECO:0000305" key="2"/>
<protein>
    <recommendedName>
        <fullName evidence="1">Small ribosomal subunit protein uS7</fullName>
    </recommendedName>
    <alternativeName>
        <fullName evidence="2">30S ribosomal protein S7</fullName>
    </alternativeName>
</protein>
<reference key="1">
    <citation type="journal article" date="2010" name="Environ. Microbiol.">
        <title>The genome of Syntrophomonas wolfei: new insights into syntrophic metabolism and biohydrogen production.</title>
        <authorList>
            <person name="Sieber J.R."/>
            <person name="Sims D.R."/>
            <person name="Han C."/>
            <person name="Kim E."/>
            <person name="Lykidis A."/>
            <person name="Lapidus A.L."/>
            <person name="McDonnald E."/>
            <person name="Rohlin L."/>
            <person name="Culley D.E."/>
            <person name="Gunsalus R."/>
            <person name="McInerney M.J."/>
        </authorList>
    </citation>
    <scope>NUCLEOTIDE SEQUENCE [LARGE SCALE GENOMIC DNA]</scope>
    <source>
        <strain>DSM 2245B / Goettingen</strain>
    </source>
</reference>
<proteinExistence type="inferred from homology"/>